<accession>Q86YD1</accession>
<accession>Q6UXX7</accession>
<accession>Q96BU3</accession>
<accession>Q9HBN4</accession>
<accession>Q9NYL1</accession>
<proteinExistence type="evidence at protein level"/>
<evidence type="ECO:0000250" key="1">
    <source>
        <dbReference type="UniProtKB" id="Q91VU8"/>
    </source>
</evidence>
<evidence type="ECO:0000256" key="2">
    <source>
        <dbReference type="SAM" id="MobiDB-lite"/>
    </source>
</evidence>
<evidence type="ECO:0000269" key="3">
    <source>
    </source>
</evidence>
<evidence type="ECO:0000269" key="4">
    <source>
    </source>
</evidence>
<evidence type="ECO:0000269" key="5">
    <source>
    </source>
</evidence>
<evidence type="ECO:0000269" key="6">
    <source>
    </source>
</evidence>
<evidence type="ECO:0000269" key="7">
    <source>
    </source>
</evidence>
<evidence type="ECO:0000269" key="8">
    <source>
    </source>
</evidence>
<evidence type="ECO:0000303" key="9">
    <source>
    </source>
</evidence>
<evidence type="ECO:0000303" key="10">
    <source>
    </source>
</evidence>
<evidence type="ECO:0000305" key="11"/>
<comment type="function">
    <text evidence="4 5 7">May activate transcription. Required for nuclear translocation of FLOT1. Promotes cell proliferation.</text>
</comment>
<comment type="subunit">
    <text evidence="5 7">May interact with CREBBP. Interacts with FLOT1.</text>
</comment>
<comment type="subcellular location">
    <subcellularLocation>
        <location evidence="4 6">Cytoplasm</location>
    </subcellularLocation>
    <subcellularLocation>
        <location evidence="4 5">Nucleus</location>
    </subcellularLocation>
    <subcellularLocation>
        <location evidence="5">Cell membrane</location>
    </subcellularLocation>
    <subcellularLocation>
        <location evidence="3">Cytoplasm</location>
        <location evidence="3">Perinuclear region</location>
    </subcellularLocation>
    <text evidence="4 5">Translocates from the cytoplasm to the nucleus at the onset of S-phase (PubMed:12598323). Also localizes to lipid rafts (PubMed:15713644).</text>
</comment>
<comment type="alternative products">
    <event type="alternative splicing"/>
    <isoform>
        <id>Q86YD1-1</id>
        <name>1</name>
        <sequence type="displayed"/>
    </isoform>
    <isoform>
        <id>Q86YD1-2</id>
        <name>2</name>
        <sequence type="described" ref="VSP_028154 VSP_028155 VSP_028156"/>
    </isoform>
    <isoform>
        <id>Q86YD1-3</id>
        <name>3</name>
        <sequence type="described" ref="VSP_028153"/>
    </isoform>
</comment>
<comment type="tissue specificity">
    <text evidence="3">Expressed in brain, heart, kidney, liver, placenta, skeletal muscle and small intestine.</text>
</comment>
<comment type="developmental stage">
    <text evidence="5">Expressed at low levels in quiescent cells. Expression rises upon entry into S-phase.</text>
</comment>
<comment type="induction">
    <text evidence="6">By testosterone.</text>
</comment>
<comment type="PTM">
    <text evidence="8">Ubiquitinated by the CRL2(KLHDC2) complex, which recognizes the diglycine (Gly-Gly) at the C-terminus, leading to its degradation (PubMed:29779948). Ubiquitinated by the CRL2(APPBP2) complex, which recognizes the Arg-Xaa-Xaa-Gly sequence at the C-terminus, leading to its degradation (PubMed:29779948).</text>
</comment>
<comment type="similarity">
    <text evidence="11">Belongs to the Mediator complex subunit 25 family. PTOV1 subfamily.</text>
</comment>
<comment type="caution">
    <text evidence="11">Despite sequence similarity to MED25, to date this protein has not been identified as a component of the Mediator complex.</text>
</comment>
<comment type="sequence caution" evidence="11">
    <conflict type="erroneous gene model prediction">
        <sequence resource="EMBL-CDS" id="AAF70635"/>
    </conflict>
</comment>
<gene>
    <name type="primary">PTOV1</name>
    <name type="synonym">ACID2</name>
    <name type="ORF">PP642</name>
    <name type="ORF">UNQ6127/PRO20092</name>
</gene>
<sequence>MVRPRRAPYRSGAGGPLGGRGRPPRPLVVRAVRSRSWPASPRGPQPPRIRARSAPPMEGARVFGALGPIGPSSPGLTLGGLAVSEHRLSNKLLAWSGVLEWQEKRRPYSDSTAKLKRTLPCQAYVNQGENLETDQWPQKLIMQLIPQQLLTTLGPLFRNSQLAQFHFTNRDCDSLKGLCRIMGNGFAGCMLFPHISPCEVRVLMLLYSSKKKIFMGLIPYDQSGFVSAIRQVITTRKQAVGPGGVNSGPVQIVNNKFLAWSGVMEWQEPRPEPNSRSKRWLPSHVYVNQGEILRTEQWPRKLYMQLIPQQLLTTLVPLFRNSRLVQFHFTKDLETLKSLCRIMDNGFAGCVHFSYKASCEIRVLMLLYSSEKKIFIGLIPHDQGNFVNGIRRVIANQQQVLQRNLEQEQQQRGMGG</sequence>
<reference key="1">
    <citation type="journal article" date="2001" name="Oncogene">
        <title>PTOV1, a novel protein overexpressed in prostate cancer containing a new class of protein homology blocks.</title>
        <authorList>
            <person name="Benedit P."/>
            <person name="Paciucci R."/>
            <person name="Thomson T.M."/>
            <person name="Valeri M."/>
            <person name="Nadal M."/>
            <person name="Caceres C."/>
            <person name="de Torres I."/>
            <person name="Estivill X."/>
            <person name="Lozano J.J."/>
            <person name="Morote J."/>
            <person name="Reventos J."/>
        </authorList>
    </citation>
    <scope>NUCLEOTIDE SEQUENCE [GENOMIC DNA]</scope>
    <scope>SUBCELLULAR LOCATION</scope>
    <scope>TISSUE SPECIFICITY</scope>
</reference>
<reference key="2">
    <citation type="journal article" date="2003" name="EMBO J.">
        <title>A novel docking site on Mediator is critical for activation by VP16 in mammalian cells.</title>
        <authorList>
            <person name="Mittler G."/>
            <person name="Stuehler T."/>
            <person name="Santolin L."/>
            <person name="Uhlmann T."/>
            <person name="Kremmer E."/>
            <person name="Lottspeich F."/>
            <person name="Berti L."/>
            <person name="Meisterernst M."/>
        </authorList>
    </citation>
    <scope>NUCLEOTIDE SEQUENCE [MRNA] (ISOFORM 1)</scope>
    <scope>NUCLEOTIDE SEQUENCE [MRNA] OF 260-416 (ISOFORMS 1/3)</scope>
    <source>
        <tissue>Colon adenocarcinoma</tissue>
    </source>
</reference>
<reference key="3">
    <citation type="journal article" date="2004" name="Proc. Natl. Acad. Sci. U.S.A.">
        <title>Large-scale cDNA transfection screening for genes related to cancer development and progression.</title>
        <authorList>
            <person name="Wan D."/>
            <person name="Gong Y."/>
            <person name="Qin W."/>
            <person name="Zhang P."/>
            <person name="Li J."/>
            <person name="Wei L."/>
            <person name="Zhou X."/>
            <person name="Li H."/>
            <person name="Qiu X."/>
            <person name="Zhong F."/>
            <person name="He L."/>
            <person name="Yu J."/>
            <person name="Yao G."/>
            <person name="Jiang H."/>
            <person name="Qian L."/>
            <person name="Yu Y."/>
            <person name="Shu H."/>
            <person name="Chen X."/>
            <person name="Xu H."/>
            <person name="Guo M."/>
            <person name="Pan Z."/>
            <person name="Chen Y."/>
            <person name="Ge C."/>
            <person name="Yang S."/>
            <person name="Gu J."/>
        </authorList>
    </citation>
    <scope>NUCLEOTIDE SEQUENCE [LARGE SCALE MRNA] (ISOFORM 3)</scope>
</reference>
<reference key="4">
    <citation type="journal article" date="2003" name="Genome Res.">
        <title>The secreted protein discovery initiative (SPDI), a large-scale effort to identify novel human secreted and transmembrane proteins: a bioinformatics assessment.</title>
        <authorList>
            <person name="Clark H.F."/>
            <person name="Gurney A.L."/>
            <person name="Abaya E."/>
            <person name="Baker K."/>
            <person name="Baldwin D.T."/>
            <person name="Brush J."/>
            <person name="Chen J."/>
            <person name="Chow B."/>
            <person name="Chui C."/>
            <person name="Crowley C."/>
            <person name="Currell B."/>
            <person name="Deuel B."/>
            <person name="Dowd P."/>
            <person name="Eaton D."/>
            <person name="Foster J.S."/>
            <person name="Grimaldi C."/>
            <person name="Gu Q."/>
            <person name="Hass P.E."/>
            <person name="Heldens S."/>
            <person name="Huang A."/>
            <person name="Kim H.S."/>
            <person name="Klimowski L."/>
            <person name="Jin Y."/>
            <person name="Johnson S."/>
            <person name="Lee J."/>
            <person name="Lewis L."/>
            <person name="Liao D."/>
            <person name="Mark M.R."/>
            <person name="Robbie E."/>
            <person name="Sanchez C."/>
            <person name="Schoenfeld J."/>
            <person name="Seshagiri S."/>
            <person name="Simmons L."/>
            <person name="Singh J."/>
            <person name="Smith V."/>
            <person name="Stinson J."/>
            <person name="Vagts A."/>
            <person name="Vandlen R.L."/>
            <person name="Watanabe C."/>
            <person name="Wieand D."/>
            <person name="Woods K."/>
            <person name="Xie M.-H."/>
            <person name="Yansura D.G."/>
            <person name="Yi S."/>
            <person name="Yu G."/>
            <person name="Yuan J."/>
            <person name="Zhang M."/>
            <person name="Zhang Z."/>
            <person name="Goddard A.D."/>
            <person name="Wood W.I."/>
            <person name="Godowski P.J."/>
            <person name="Gray A.M."/>
        </authorList>
    </citation>
    <scope>NUCLEOTIDE SEQUENCE [LARGE SCALE MRNA] (ISOFORM 2)</scope>
</reference>
<reference key="5">
    <citation type="submission" date="2005-07" db="EMBL/GenBank/DDBJ databases">
        <authorList>
            <person name="Mural R.J."/>
            <person name="Istrail S."/>
            <person name="Sutton G.G."/>
            <person name="Florea L."/>
            <person name="Halpern A.L."/>
            <person name="Mobarry C.M."/>
            <person name="Lippert R."/>
            <person name="Walenz B."/>
            <person name="Shatkay H."/>
            <person name="Dew I."/>
            <person name="Miller J.R."/>
            <person name="Flanigan M.J."/>
            <person name="Edwards N.J."/>
            <person name="Bolanos R."/>
            <person name="Fasulo D."/>
            <person name="Halldorsson B.V."/>
            <person name="Hannenhalli S."/>
            <person name="Turner R."/>
            <person name="Yooseph S."/>
            <person name="Lu F."/>
            <person name="Nusskern D.R."/>
            <person name="Shue B.C."/>
            <person name="Zheng X.H."/>
            <person name="Zhong F."/>
            <person name="Delcher A.L."/>
            <person name="Huson D.H."/>
            <person name="Kravitz S.A."/>
            <person name="Mouchard L."/>
            <person name="Reinert K."/>
            <person name="Remington K.A."/>
            <person name="Clark A.G."/>
            <person name="Waterman M.S."/>
            <person name="Eichler E.E."/>
            <person name="Adams M.D."/>
            <person name="Hunkapiller M.W."/>
            <person name="Myers E.W."/>
            <person name="Venter J.C."/>
        </authorList>
    </citation>
    <scope>NUCLEOTIDE SEQUENCE [LARGE SCALE GENOMIC DNA]</scope>
</reference>
<reference key="6">
    <citation type="journal article" date="2004" name="Genome Res.">
        <title>The status, quality, and expansion of the NIH full-length cDNA project: the Mammalian Gene Collection (MGC).</title>
        <authorList>
            <consortium name="The MGC Project Team"/>
        </authorList>
    </citation>
    <scope>NUCLEOTIDE SEQUENCE [LARGE SCALE MRNA] (ISOFORM 1)</scope>
    <source>
        <tissue>Brain</tissue>
        <tissue>Pancreas</tissue>
    </source>
</reference>
<reference key="7">
    <citation type="journal article" date="2003" name="Am. J. Pathol.">
        <title>PTOV-1, a novel protein overexpressed in prostate cancer, shuttles between the cytoplasm and the nucleus and promotes entry into the S phase of the cell division cycle.</title>
        <authorList>
            <person name="Santamaria A."/>
            <person name="Fernandez P.L."/>
            <person name="Farre X."/>
            <person name="Benedit P."/>
            <person name="Reventos J."/>
            <person name="Morote J."/>
            <person name="Paciucci R."/>
            <person name="Thomson T.M."/>
        </authorList>
    </citation>
    <scope>FUNCTION</scope>
    <scope>SUBCELLULAR LOCATION</scope>
</reference>
<reference key="8">
    <citation type="journal article" date="2005" name="Mol. Cell. Biol.">
        <title>PTOV1 enables the nuclear translocation and mitogenic activity of flotillin-1, a major protein of lipid rafts.</title>
        <authorList>
            <person name="Santamaria A."/>
            <person name="Castellanos E."/>
            <person name="Gomez V."/>
            <person name="Benedit P."/>
            <person name="Renau-Piqueras J."/>
            <person name="Morote J."/>
            <person name="Reventos J."/>
            <person name="Thomson T.M."/>
            <person name="Paciucci R."/>
        </authorList>
    </citation>
    <scope>FUNCTION</scope>
    <scope>INTERACTION WITH FLOT1</scope>
    <scope>SUBCELLULAR LOCATION</scope>
    <scope>DEVELOPMENTAL STAGE</scope>
</reference>
<reference key="9">
    <citation type="journal article" date="2005" name="Mol. Cell. Proteomics">
        <title>Targeted proteomic analysis of 14-3-3 sigma, a p53 effector commonly silenced in cancer.</title>
        <authorList>
            <person name="Benzinger A."/>
            <person name="Muster N."/>
            <person name="Koch H.B."/>
            <person name="Yates J.R. III"/>
            <person name="Hermeking H."/>
        </authorList>
    </citation>
    <scope>IDENTIFICATION BY MASS SPECTROMETRY</scope>
</reference>
<reference key="10">
    <citation type="journal article" date="2006" name="J. Pathol.">
        <title>PTOV1: a novel testosterone-induced atherogenic gene in human aorta.</title>
        <authorList>
            <person name="Nakamura Y."/>
            <person name="Suzuki T."/>
            <person name="Igarashi K."/>
            <person name="Kanno J."/>
            <person name="Furukawa T."/>
            <person name="Tazawa C."/>
            <person name="Fujishima F."/>
            <person name="Miura I."/>
            <person name="Ando T."/>
            <person name="Moriyama N."/>
            <person name="Moriya T."/>
            <person name="Saito H."/>
            <person name="Yamada S."/>
            <person name="Sasano H."/>
        </authorList>
    </citation>
    <scope>SUBCELLULAR LOCATION</scope>
    <scope>INDUCTION</scope>
</reference>
<reference key="11">
    <citation type="journal article" date="2007" name="EMBO J.">
        <title>MED25 is distinct from TRAP220/MED1 in cooperating with CBP for retinoid receptor activation.</title>
        <authorList>
            <person name="Lee H.-K."/>
            <person name="Park U.-H."/>
            <person name="Kim E.-J."/>
            <person name="Um S.-J."/>
        </authorList>
    </citation>
    <scope>FUNCTION</scope>
    <scope>INTERACTION WITH CREBBP</scope>
</reference>
<reference key="12">
    <citation type="journal article" date="2018" name="Cell">
        <title>The eukaryotic proteome is shaped by E3 ubiquitin ligases targeting C-terminal degrons.</title>
        <authorList>
            <person name="Koren I."/>
            <person name="Timms R.T."/>
            <person name="Kula T."/>
            <person name="Xu Q."/>
            <person name="Li M.Z."/>
            <person name="Elledge S.J."/>
        </authorList>
    </citation>
    <scope>UBIQUITINATION</scope>
</reference>
<feature type="chain" id="PRO_0000304965" description="Prostate tumor-overexpressed gene 1 protein">
    <location>
        <begin position="1"/>
        <end position="416"/>
    </location>
</feature>
<feature type="region of interest" description="Disordered" evidence="2">
    <location>
        <begin position="1"/>
        <end position="53"/>
    </location>
</feature>
<feature type="region of interest" description="Interaction with FLOT1" evidence="5">
    <location>
        <begin position="184"/>
        <end position="416"/>
    </location>
</feature>
<feature type="compositionally biased region" description="Gly residues" evidence="2">
    <location>
        <begin position="12"/>
        <end position="21"/>
    </location>
</feature>
<feature type="compositionally biased region" description="Low complexity" evidence="2">
    <location>
        <begin position="27"/>
        <end position="36"/>
    </location>
</feature>
<feature type="modified residue" description="Phosphoserine" evidence="1">
    <location>
        <position position="53"/>
    </location>
</feature>
<feature type="splice variant" id="VSP_028153" description="In isoform 3." evidence="10">
    <location>
        <begin position="1"/>
        <end position="189"/>
    </location>
</feature>
<feature type="splice variant" id="VSP_028154" description="In isoform 2." evidence="9">
    <location>
        <begin position="1"/>
        <end position="32"/>
    </location>
</feature>
<feature type="splice variant" id="VSP_028155" description="In isoform 2." evidence="9">
    <original>RSRSWPASPRGPQPPRIRARSAPPM</original>
    <variation>MRSPAVPTPARGQLGVAFVLLPPHS</variation>
    <location>
        <begin position="33"/>
        <end position="57"/>
    </location>
</feature>
<feature type="splice variant" id="VSP_028156" description="In isoform 2." evidence="9">
    <original>AGCVHFSYKASCEIRVLMLLYSSEKKIFIGLIPHDQGNFVNGIRRVIANQ</original>
    <variation>RRKSSLASSPMTRATLSTASGVSLPTSSRSCSGTWSRSNSNEGWGGSGYP</variation>
    <location>
        <begin position="348"/>
        <end position="397"/>
    </location>
</feature>
<dbReference type="EMBL" id="AF238381">
    <property type="protein sequence ID" value="AAF70635.1"/>
    <property type="status" value="ALT_SEQ"/>
    <property type="molecule type" value="Genomic_DNA"/>
</dbReference>
<dbReference type="EMBL" id="AJ617480">
    <property type="protein sequence ID" value="CAE84582.1"/>
    <property type="molecule type" value="mRNA"/>
</dbReference>
<dbReference type="EMBL" id="AF218026">
    <property type="protein sequence ID" value="AAG17268.1"/>
    <property type="molecule type" value="mRNA"/>
</dbReference>
<dbReference type="EMBL" id="AY358168">
    <property type="protein sequence ID" value="AAQ88535.1"/>
    <property type="molecule type" value="mRNA"/>
</dbReference>
<dbReference type="EMBL" id="CH471177">
    <property type="protein sequence ID" value="EAW52558.1"/>
    <property type="molecule type" value="Genomic_DNA"/>
</dbReference>
<dbReference type="EMBL" id="BC015172">
    <property type="protein sequence ID" value="AAH15172.1"/>
    <property type="molecule type" value="mRNA"/>
</dbReference>
<dbReference type="EMBL" id="BC042921">
    <property type="protein sequence ID" value="AAH42921.1"/>
    <property type="molecule type" value="mRNA"/>
</dbReference>
<dbReference type="CCDS" id="CCDS12782.1">
    <molecule id="Q86YD1-1"/>
</dbReference>
<dbReference type="RefSeq" id="NP_001292034.1">
    <molecule id="Q86YD1-1"/>
    <property type="nucleotide sequence ID" value="NM_001305105.2"/>
</dbReference>
<dbReference type="RefSeq" id="NP_001292037.1">
    <property type="nucleotide sequence ID" value="NM_001305108.1"/>
</dbReference>
<dbReference type="RefSeq" id="NP_001380939.1">
    <molecule id="Q86YD1-1"/>
    <property type="nucleotide sequence ID" value="NM_001394010.1"/>
</dbReference>
<dbReference type="RefSeq" id="NP_059128.2">
    <molecule id="Q86YD1-1"/>
    <property type="nucleotide sequence ID" value="NM_017432.4"/>
</dbReference>
<dbReference type="SMR" id="Q86YD1"/>
<dbReference type="BioGRID" id="119792">
    <property type="interactions" value="111"/>
</dbReference>
<dbReference type="FunCoup" id="Q86YD1">
    <property type="interactions" value="760"/>
</dbReference>
<dbReference type="IntAct" id="Q86YD1">
    <property type="interactions" value="36"/>
</dbReference>
<dbReference type="MINT" id="Q86YD1"/>
<dbReference type="STRING" id="9606.ENSP00000375717"/>
<dbReference type="GlyGen" id="Q86YD1">
    <property type="glycosylation" value="1 site, 1 O-linked glycan (1 site)"/>
</dbReference>
<dbReference type="iPTMnet" id="Q86YD1"/>
<dbReference type="PhosphoSitePlus" id="Q86YD1"/>
<dbReference type="BioMuta" id="PTOV1"/>
<dbReference type="DMDM" id="74762466"/>
<dbReference type="jPOST" id="Q86YD1"/>
<dbReference type="MassIVE" id="Q86YD1"/>
<dbReference type="PaxDb" id="9606-ENSP00000375717"/>
<dbReference type="PeptideAtlas" id="Q86YD1"/>
<dbReference type="ProteomicsDB" id="70397">
    <molecule id="Q86YD1-1"/>
</dbReference>
<dbReference type="ProteomicsDB" id="70398">
    <molecule id="Q86YD1-2"/>
</dbReference>
<dbReference type="ProteomicsDB" id="70399">
    <molecule id="Q86YD1-3"/>
</dbReference>
<dbReference type="Pumba" id="Q86YD1"/>
<dbReference type="Antibodypedia" id="18733">
    <property type="antibodies" value="124 antibodies from 25 providers"/>
</dbReference>
<dbReference type="DNASU" id="53635"/>
<dbReference type="Ensembl" id="ENST00000391842.6">
    <molecule id="Q86YD1-1"/>
    <property type="protein sequence ID" value="ENSP00000375717.1"/>
    <property type="gene ID" value="ENSG00000104960.15"/>
</dbReference>
<dbReference type="Ensembl" id="ENST00000599732.5">
    <molecule id="Q86YD1-1"/>
    <property type="protein sequence ID" value="ENSP00000469128.1"/>
    <property type="gene ID" value="ENSG00000104960.15"/>
</dbReference>
<dbReference type="Ensembl" id="ENST00000601675.5">
    <molecule id="Q86YD1-1"/>
    <property type="protein sequence ID" value="ENSP00000472816.1"/>
    <property type="gene ID" value="ENSG00000104960.15"/>
</dbReference>
<dbReference type="GeneID" id="53635"/>
<dbReference type="KEGG" id="hsa:53635"/>
<dbReference type="MANE-Select" id="ENST00000391842.6">
    <property type="protein sequence ID" value="ENSP00000375717.1"/>
    <property type="RefSeq nucleotide sequence ID" value="NM_001394010.1"/>
    <property type="RefSeq protein sequence ID" value="NP_001380939.1"/>
</dbReference>
<dbReference type="UCSC" id="uc002pqb.5">
    <molecule id="Q86YD1-1"/>
    <property type="organism name" value="human"/>
</dbReference>
<dbReference type="AGR" id="HGNC:9632"/>
<dbReference type="CTD" id="53635"/>
<dbReference type="DisGeNET" id="53635"/>
<dbReference type="GeneCards" id="PTOV1"/>
<dbReference type="HGNC" id="HGNC:9632">
    <property type="gene designation" value="PTOV1"/>
</dbReference>
<dbReference type="HPA" id="ENSG00000104960">
    <property type="expression patterns" value="Low tissue specificity"/>
</dbReference>
<dbReference type="MIM" id="610195">
    <property type="type" value="gene"/>
</dbReference>
<dbReference type="neXtProt" id="NX_Q86YD1"/>
<dbReference type="OpenTargets" id="ENSG00000104960"/>
<dbReference type="PharmGKB" id="PA33976"/>
<dbReference type="VEuPathDB" id="HostDB:ENSG00000104960"/>
<dbReference type="eggNOG" id="ENOG502SS25">
    <property type="taxonomic scope" value="Eukaryota"/>
</dbReference>
<dbReference type="GeneTree" id="ENSGT00940000161923"/>
<dbReference type="HOGENOM" id="CLU_045342_0_0_1"/>
<dbReference type="InParanoid" id="Q86YD1"/>
<dbReference type="OMA" id="NELLWTG"/>
<dbReference type="OrthoDB" id="7690434at2759"/>
<dbReference type="PAN-GO" id="Q86YD1">
    <property type="GO annotations" value="2 GO annotations based on evolutionary models"/>
</dbReference>
<dbReference type="PhylomeDB" id="Q86YD1"/>
<dbReference type="TreeFam" id="TF329598"/>
<dbReference type="PathwayCommons" id="Q86YD1"/>
<dbReference type="SignaLink" id="Q86YD1"/>
<dbReference type="BioGRID-ORCS" id="53635">
    <property type="hits" value="9 hits in 1070 CRISPR screens"/>
</dbReference>
<dbReference type="ChiTaRS" id="PTOV1">
    <property type="organism name" value="human"/>
</dbReference>
<dbReference type="GeneWiki" id="PTOV1"/>
<dbReference type="GenomeRNAi" id="53635"/>
<dbReference type="Pharos" id="Q86YD1">
    <property type="development level" value="Tbio"/>
</dbReference>
<dbReference type="PRO" id="PR:Q86YD1"/>
<dbReference type="Proteomes" id="UP000005640">
    <property type="component" value="Chromosome 19"/>
</dbReference>
<dbReference type="RNAct" id="Q86YD1">
    <property type="molecule type" value="protein"/>
</dbReference>
<dbReference type="Bgee" id="ENSG00000104960">
    <property type="expression patterns" value="Expressed in ganglionic eminence and 204 other cell types or tissues"/>
</dbReference>
<dbReference type="ExpressionAtlas" id="Q86YD1">
    <property type="expression patterns" value="baseline and differential"/>
</dbReference>
<dbReference type="GO" id="GO:0005654">
    <property type="term" value="C:nucleoplasm"/>
    <property type="evidence" value="ECO:0000314"/>
    <property type="project" value="HPA"/>
</dbReference>
<dbReference type="GO" id="GO:0048471">
    <property type="term" value="C:perinuclear region of cytoplasm"/>
    <property type="evidence" value="ECO:0007669"/>
    <property type="project" value="UniProtKB-SubCell"/>
</dbReference>
<dbReference type="GO" id="GO:0005886">
    <property type="term" value="C:plasma membrane"/>
    <property type="evidence" value="ECO:0007669"/>
    <property type="project" value="UniProtKB-SubCell"/>
</dbReference>
<dbReference type="GO" id="GO:0005667">
    <property type="term" value="C:transcription regulator complex"/>
    <property type="evidence" value="ECO:0000318"/>
    <property type="project" value="GO_Central"/>
</dbReference>
<dbReference type="GO" id="GO:0045944">
    <property type="term" value="P:positive regulation of transcription by RNA polymerase II"/>
    <property type="evidence" value="ECO:0000318"/>
    <property type="project" value="GO_Central"/>
</dbReference>
<dbReference type="FunFam" id="2.40.290.30:FF:000001">
    <property type="entry name" value="Mediator of RNA polymerase II transcription subunit 25"/>
    <property type="match status" value="2"/>
</dbReference>
<dbReference type="Gene3D" id="2.40.290.30">
    <property type="entry name" value="Mediator complex subunit 25, ACID domain"/>
    <property type="match status" value="2"/>
</dbReference>
<dbReference type="InterPro" id="IPR021394">
    <property type="entry name" value="Med25_PTOV"/>
</dbReference>
<dbReference type="InterPro" id="IPR038196">
    <property type="entry name" value="Med25_PTOV_sf"/>
</dbReference>
<dbReference type="PANTHER" id="PTHR12433">
    <property type="entry name" value="MEDIATOR OF RNA POLYMERASE II TRANSCRIPTION SUBUNIT 25"/>
    <property type="match status" value="1"/>
</dbReference>
<dbReference type="PANTHER" id="PTHR12433:SF11">
    <property type="entry name" value="MEDIATOR OF RNA POLYMERASE II TRANSCRIPTION SUBUNIT 25"/>
    <property type="match status" value="1"/>
</dbReference>
<dbReference type="Pfam" id="PF11232">
    <property type="entry name" value="Med25"/>
    <property type="match status" value="2"/>
</dbReference>
<protein>
    <recommendedName>
        <fullName>Prostate tumor-overexpressed gene 1 protein</fullName>
        <shortName>PTOV-1</shortName>
    </recommendedName>
    <alternativeName>
        <fullName>Activator interaction domain-containing protein 2</fullName>
    </alternativeName>
</protein>
<name>PTOV1_HUMAN</name>
<organism>
    <name type="scientific">Homo sapiens</name>
    <name type="common">Human</name>
    <dbReference type="NCBI Taxonomy" id="9606"/>
    <lineage>
        <taxon>Eukaryota</taxon>
        <taxon>Metazoa</taxon>
        <taxon>Chordata</taxon>
        <taxon>Craniata</taxon>
        <taxon>Vertebrata</taxon>
        <taxon>Euteleostomi</taxon>
        <taxon>Mammalia</taxon>
        <taxon>Eutheria</taxon>
        <taxon>Euarchontoglires</taxon>
        <taxon>Primates</taxon>
        <taxon>Haplorrhini</taxon>
        <taxon>Catarrhini</taxon>
        <taxon>Hominidae</taxon>
        <taxon>Homo</taxon>
    </lineage>
</organism>
<keyword id="KW-0010">Activator</keyword>
<keyword id="KW-0025">Alternative splicing</keyword>
<keyword id="KW-1003">Cell membrane</keyword>
<keyword id="KW-0963">Cytoplasm</keyword>
<keyword id="KW-0472">Membrane</keyword>
<keyword id="KW-0539">Nucleus</keyword>
<keyword id="KW-0597">Phosphoprotein</keyword>
<keyword id="KW-1267">Proteomics identification</keyword>
<keyword id="KW-1185">Reference proteome</keyword>
<keyword id="KW-0804">Transcription</keyword>
<keyword id="KW-0805">Transcription regulation</keyword>
<keyword id="KW-0832">Ubl conjugation</keyword>